<accession>Q9CNB3</accession>
<dbReference type="EMBL" id="AE004439">
    <property type="protein sequence ID" value="AAK02603.1"/>
    <property type="molecule type" value="Genomic_DNA"/>
</dbReference>
<dbReference type="RefSeq" id="WP_005753908.1">
    <property type="nucleotide sequence ID" value="NC_002663.1"/>
</dbReference>
<dbReference type="SMR" id="Q9CNB3"/>
<dbReference type="STRING" id="272843.PM0519"/>
<dbReference type="EnsemblBacteria" id="AAK02603">
    <property type="protein sequence ID" value="AAK02603"/>
    <property type="gene ID" value="PM0519"/>
</dbReference>
<dbReference type="KEGG" id="pmu:PM0519"/>
<dbReference type="PATRIC" id="fig|272843.6.peg.525"/>
<dbReference type="HOGENOM" id="CLU_163886_0_0_6"/>
<dbReference type="OrthoDB" id="9802792at2"/>
<dbReference type="Proteomes" id="UP000000809">
    <property type="component" value="Chromosome"/>
</dbReference>
<dbReference type="Gene3D" id="2.30.29.80">
    <property type="match status" value="1"/>
</dbReference>
<dbReference type="InterPro" id="IPR010879">
    <property type="entry name" value="DUF1508"/>
</dbReference>
<dbReference type="InterPro" id="IPR051141">
    <property type="entry name" value="UPF0339_domain"/>
</dbReference>
<dbReference type="InterPro" id="IPR036913">
    <property type="entry name" value="YegP-like_sf"/>
</dbReference>
<dbReference type="PANTHER" id="PTHR40606">
    <property type="match status" value="1"/>
</dbReference>
<dbReference type="PANTHER" id="PTHR40606:SF1">
    <property type="entry name" value="UPF0339 PROTEIN YEGP"/>
    <property type="match status" value="1"/>
</dbReference>
<dbReference type="Pfam" id="PF07411">
    <property type="entry name" value="DUF1508"/>
    <property type="match status" value="2"/>
</dbReference>
<dbReference type="SUPFAM" id="SSF160113">
    <property type="entry name" value="YegP-like"/>
    <property type="match status" value="2"/>
</dbReference>
<proteinExistence type="inferred from homology"/>
<evidence type="ECO:0000305" key="1"/>
<feature type="chain" id="PRO_0000218141" description="UPF0339 protein PM0519">
    <location>
        <begin position="1"/>
        <end position="114"/>
    </location>
</feature>
<feature type="repeat" description="1">
    <location>
        <begin position="11"/>
        <end position="59"/>
    </location>
</feature>
<feature type="repeat" description="2">
    <location>
        <begin position="62"/>
        <end position="110"/>
    </location>
</feature>
<gene>
    <name type="ordered locus">PM0519</name>
</gene>
<comment type="similarity">
    <text evidence="1">Belongs to the UPF0339 family. Duplicated subfamily.</text>
</comment>
<reference key="1">
    <citation type="journal article" date="2001" name="Proc. Natl. Acad. Sci. U.S.A.">
        <title>Complete genomic sequence of Pasteurella multocida Pm70.</title>
        <authorList>
            <person name="May B.J."/>
            <person name="Zhang Q."/>
            <person name="Li L.L."/>
            <person name="Paustian M.L."/>
            <person name="Whittam T.S."/>
            <person name="Kapur V."/>
        </authorList>
    </citation>
    <scope>NUCLEOTIDE SEQUENCE [LARGE SCALE GENOMIC DNA]</scope>
    <source>
        <strain>Pm70</strain>
    </source>
</reference>
<name>Y519_PASMU</name>
<keyword id="KW-1185">Reference proteome</keyword>
<keyword id="KW-0677">Repeat</keyword>
<protein>
    <recommendedName>
        <fullName>UPF0339 protein PM0519</fullName>
    </recommendedName>
</protein>
<organism>
    <name type="scientific">Pasteurella multocida (strain Pm70)</name>
    <dbReference type="NCBI Taxonomy" id="272843"/>
    <lineage>
        <taxon>Bacteria</taxon>
        <taxon>Pseudomonadati</taxon>
        <taxon>Pseudomonadota</taxon>
        <taxon>Gammaproteobacteria</taxon>
        <taxon>Pasteurellales</taxon>
        <taxon>Pasteurellaceae</taxon>
        <taxon>Pasteurella</taxon>
    </lineage>
</organism>
<sequence length="114" mass="12620">MALGWYELKLAKDGQFMFNLKAANSQVILTSELYRSRSAAENGIASVQKNGLDEKNFEVRVAKNDKPYFVLKAKNHQEIGRSQYYSSSVSAKKGIVSVTKNAASTVIKDLTNEA</sequence>